<comment type="subunit">
    <text evidence="2">Homotrimer.</text>
</comment>
<comment type="similarity">
    <text evidence="3">Belongs to the aspartate/ornithine carbamoyltransferase superfamily.</text>
</comment>
<comment type="sequence caution" evidence="3">
    <conflict type="erroneous initiation">
        <sequence resource="EMBL-CDS" id="BAB37166"/>
    </conflict>
    <text>Truncated N-terminus.</text>
</comment>
<accession>Q8X6C0</accession>
<sequence length="396" mass="44186">MMKTVNELIKDINSLTSHLHEKDFLLTWEQTPDELKQVLDVAAALKALRAENISTKVFNSGLGISVFRDNSTRTRFSYASALNLLGLAQQDLDEGKSQIAHGETVRETANMISFCADAIGIRDDMYLGAGNAYMREVGAALDDGYKQGVLPQRPALVNLQCDIDHPTQSMADLAWLREHFGSLENLKGKKIAMTWAYSPSYGKPLSVPQGIIGLMTRFGMDVTLAHPEGYDLIPDVVEVAKNNAKASGGSFRQVTSMEEAFKDADIVYPKSWAPYKVMEQRTELLRANDHEGLKALEKQCLAQNAQHKDWHCTEEMMELTRDGEALYMHCLPADISGVSCKEGEVTEGVFEKYRIATYKEASWKPYIIAAMILSRKYAKPGALLEQLLKEAQERVK</sequence>
<dbReference type="EC" id="2.1.3.-" evidence="2"/>
<dbReference type="EMBL" id="AE005174">
    <property type="protein sequence ID" value="AAG57999.1"/>
    <property type="molecule type" value="Genomic_DNA"/>
</dbReference>
<dbReference type="EMBL" id="BA000007">
    <property type="protein sequence ID" value="BAB37166.2"/>
    <property type="status" value="ALT_INIT"/>
    <property type="molecule type" value="Genomic_DNA"/>
</dbReference>
<dbReference type="PIR" id="C85942">
    <property type="entry name" value="C85942"/>
</dbReference>
<dbReference type="PIR" id="G91096">
    <property type="entry name" value="G91096"/>
</dbReference>
<dbReference type="RefSeq" id="NP_311770.1">
    <property type="nucleotide sequence ID" value="NC_002695.1"/>
</dbReference>
<dbReference type="SMR" id="Q8X6C0"/>
<dbReference type="STRING" id="155864.Z4209"/>
<dbReference type="GeneID" id="916433"/>
<dbReference type="KEGG" id="ece:Z4209"/>
<dbReference type="KEGG" id="ecs:ECs_3743"/>
<dbReference type="PATRIC" id="fig|386585.9.peg.3905"/>
<dbReference type="eggNOG" id="COG0078">
    <property type="taxonomic scope" value="Bacteria"/>
</dbReference>
<dbReference type="HOGENOM" id="CLU_043846_3_3_6"/>
<dbReference type="OMA" id="VAMTWAY"/>
<dbReference type="Proteomes" id="UP000000558">
    <property type="component" value="Chromosome"/>
</dbReference>
<dbReference type="Proteomes" id="UP000002519">
    <property type="component" value="Chromosome"/>
</dbReference>
<dbReference type="GO" id="GO:0016597">
    <property type="term" value="F:amino acid binding"/>
    <property type="evidence" value="ECO:0007669"/>
    <property type="project" value="InterPro"/>
</dbReference>
<dbReference type="GO" id="GO:0004585">
    <property type="term" value="F:ornithine carbamoyltransferase activity"/>
    <property type="evidence" value="ECO:0007669"/>
    <property type="project" value="TreeGrafter"/>
</dbReference>
<dbReference type="GO" id="GO:0042450">
    <property type="term" value="P:arginine biosynthetic process via ornithine"/>
    <property type="evidence" value="ECO:0007669"/>
    <property type="project" value="TreeGrafter"/>
</dbReference>
<dbReference type="GO" id="GO:0019240">
    <property type="term" value="P:citrulline biosynthetic process"/>
    <property type="evidence" value="ECO:0007669"/>
    <property type="project" value="TreeGrafter"/>
</dbReference>
<dbReference type="Gene3D" id="3.40.50.1370">
    <property type="entry name" value="Aspartate/ornithine carbamoyltransferase"/>
    <property type="match status" value="2"/>
</dbReference>
<dbReference type="InterPro" id="IPR006132">
    <property type="entry name" value="Asp/Orn_carbamoyltranf_P-bd"/>
</dbReference>
<dbReference type="InterPro" id="IPR006130">
    <property type="entry name" value="Asp/Orn_carbamoylTrfase"/>
</dbReference>
<dbReference type="InterPro" id="IPR036901">
    <property type="entry name" value="Asp/Orn_carbamoylTrfase_sf"/>
</dbReference>
<dbReference type="InterPro" id="IPR006131">
    <property type="entry name" value="Asp_carbamoyltransf_Asp/Orn-bd"/>
</dbReference>
<dbReference type="InterPro" id="IPR017702">
    <property type="entry name" value="Carbamoyltransferase_YgeW"/>
</dbReference>
<dbReference type="NCBIfam" id="NF005538">
    <property type="entry name" value="PRK07200.1"/>
    <property type="match status" value="1"/>
</dbReference>
<dbReference type="NCBIfam" id="TIGR03316">
    <property type="entry name" value="ygeW"/>
    <property type="match status" value="1"/>
</dbReference>
<dbReference type="PANTHER" id="PTHR45753">
    <property type="entry name" value="ORNITHINE CARBAMOYLTRANSFERASE, MITOCHONDRIAL"/>
    <property type="match status" value="1"/>
</dbReference>
<dbReference type="PANTHER" id="PTHR45753:SF3">
    <property type="entry name" value="ORNITHINE TRANSCARBAMYLASE, MITOCHONDRIAL"/>
    <property type="match status" value="1"/>
</dbReference>
<dbReference type="Pfam" id="PF00185">
    <property type="entry name" value="OTCace"/>
    <property type="match status" value="1"/>
</dbReference>
<dbReference type="Pfam" id="PF02729">
    <property type="entry name" value="OTCace_N"/>
    <property type="match status" value="1"/>
</dbReference>
<dbReference type="PRINTS" id="PR00100">
    <property type="entry name" value="AOTCASE"/>
</dbReference>
<dbReference type="PRINTS" id="PR00101">
    <property type="entry name" value="ATCASE"/>
</dbReference>
<dbReference type="SUPFAM" id="SSF53671">
    <property type="entry name" value="Aspartate/ornithine carbamoyltransferase"/>
    <property type="match status" value="1"/>
</dbReference>
<feature type="chain" id="PRO_0000113265" description="Putative carbamoyltransferase YgeW">
    <location>
        <begin position="1"/>
        <end position="396"/>
    </location>
</feature>
<feature type="binding site" evidence="1">
    <location>
        <begin position="71"/>
        <end position="74"/>
    </location>
    <ligand>
        <name>carbamoyl phosphate</name>
        <dbReference type="ChEBI" id="CHEBI:58228"/>
    </ligand>
</feature>
<feature type="binding site" evidence="1">
    <location>
        <position position="98"/>
    </location>
    <ligand>
        <name>carbamoyl phosphate</name>
        <dbReference type="ChEBI" id="CHEBI:58228"/>
    </ligand>
</feature>
<feature type="binding site" evidence="1">
    <location>
        <begin position="165"/>
        <end position="168"/>
    </location>
    <ligand>
        <name>carbamoyl phosphate</name>
        <dbReference type="ChEBI" id="CHEBI:58228"/>
    </ligand>
</feature>
<feature type="binding site" evidence="1">
    <location>
        <begin position="330"/>
        <end position="331"/>
    </location>
    <ligand>
        <name>carbamoyl phosphate</name>
        <dbReference type="ChEBI" id="CHEBI:58228"/>
    </ligand>
</feature>
<evidence type="ECO:0000250" key="1">
    <source>
        <dbReference type="UniProtKB" id="P04391"/>
    </source>
</evidence>
<evidence type="ECO:0000250" key="2">
    <source>
        <dbReference type="UniProtKB" id="Q46803"/>
    </source>
</evidence>
<evidence type="ECO:0000305" key="3"/>
<protein>
    <recommendedName>
        <fullName evidence="2">Putative carbamoyltransferase YgeW</fullName>
        <ecNumber evidence="2">2.1.3.-</ecNumber>
    </recommendedName>
</protein>
<proteinExistence type="inferred from homology"/>
<gene>
    <name type="primary">ygeW</name>
    <name type="ordered locus">Z4209</name>
    <name type="ordered locus">ECs3743</name>
</gene>
<organism>
    <name type="scientific">Escherichia coli O157:H7</name>
    <dbReference type="NCBI Taxonomy" id="83334"/>
    <lineage>
        <taxon>Bacteria</taxon>
        <taxon>Pseudomonadati</taxon>
        <taxon>Pseudomonadota</taxon>
        <taxon>Gammaproteobacteria</taxon>
        <taxon>Enterobacterales</taxon>
        <taxon>Enterobacteriaceae</taxon>
        <taxon>Escherichia</taxon>
    </lineage>
</organism>
<keyword id="KW-1185">Reference proteome</keyword>
<keyword id="KW-0808">Transferase</keyword>
<name>YGEW_ECO57</name>
<reference key="1">
    <citation type="journal article" date="2001" name="Nature">
        <title>Genome sequence of enterohaemorrhagic Escherichia coli O157:H7.</title>
        <authorList>
            <person name="Perna N.T."/>
            <person name="Plunkett G. III"/>
            <person name="Burland V."/>
            <person name="Mau B."/>
            <person name="Glasner J.D."/>
            <person name="Rose D.J."/>
            <person name="Mayhew G.F."/>
            <person name="Evans P.S."/>
            <person name="Gregor J."/>
            <person name="Kirkpatrick H.A."/>
            <person name="Posfai G."/>
            <person name="Hackett J."/>
            <person name="Klink S."/>
            <person name="Boutin A."/>
            <person name="Shao Y."/>
            <person name="Miller L."/>
            <person name="Grotbeck E.J."/>
            <person name="Davis N.W."/>
            <person name="Lim A."/>
            <person name="Dimalanta E.T."/>
            <person name="Potamousis K."/>
            <person name="Apodaca J."/>
            <person name="Anantharaman T.S."/>
            <person name="Lin J."/>
            <person name="Yen G."/>
            <person name="Schwartz D.C."/>
            <person name="Welch R.A."/>
            <person name="Blattner F.R."/>
        </authorList>
    </citation>
    <scope>NUCLEOTIDE SEQUENCE [LARGE SCALE GENOMIC DNA]</scope>
    <source>
        <strain>O157:H7 / EDL933 / ATCC 700927 / EHEC</strain>
    </source>
</reference>
<reference key="2">
    <citation type="journal article" date="2001" name="DNA Res.">
        <title>Complete genome sequence of enterohemorrhagic Escherichia coli O157:H7 and genomic comparison with a laboratory strain K-12.</title>
        <authorList>
            <person name="Hayashi T."/>
            <person name="Makino K."/>
            <person name="Ohnishi M."/>
            <person name="Kurokawa K."/>
            <person name="Ishii K."/>
            <person name="Yokoyama K."/>
            <person name="Han C.-G."/>
            <person name="Ohtsubo E."/>
            <person name="Nakayama K."/>
            <person name="Murata T."/>
            <person name="Tanaka M."/>
            <person name="Tobe T."/>
            <person name="Iida T."/>
            <person name="Takami H."/>
            <person name="Honda T."/>
            <person name="Sasakawa C."/>
            <person name="Ogasawara N."/>
            <person name="Yasunaga T."/>
            <person name="Kuhara S."/>
            <person name="Shiba T."/>
            <person name="Hattori M."/>
            <person name="Shinagawa H."/>
        </authorList>
    </citation>
    <scope>NUCLEOTIDE SEQUENCE [LARGE SCALE GENOMIC DNA]</scope>
    <source>
        <strain>O157:H7 / Sakai / RIMD 0509952 / EHEC</strain>
    </source>
</reference>